<dbReference type="EMBL" id="AM040264">
    <property type="protein sequence ID" value="CAJ11828.1"/>
    <property type="molecule type" value="Genomic_DNA"/>
</dbReference>
<dbReference type="RefSeq" id="WP_002967956.1">
    <property type="nucleotide sequence ID" value="NZ_KN046823.1"/>
</dbReference>
<dbReference type="SMR" id="Q2YLN8"/>
<dbReference type="STRING" id="359391.BAB1_1872"/>
<dbReference type="GeneID" id="93017794"/>
<dbReference type="KEGG" id="bmf:BAB1_1872"/>
<dbReference type="PATRIC" id="fig|359391.11.peg.1109"/>
<dbReference type="HOGENOM" id="CLU_036856_0_1_5"/>
<dbReference type="Proteomes" id="UP000002719">
    <property type="component" value="Chromosome I"/>
</dbReference>
<dbReference type="GO" id="GO:0005737">
    <property type="term" value="C:cytoplasm"/>
    <property type="evidence" value="ECO:0007669"/>
    <property type="project" value="UniProtKB-SubCell"/>
</dbReference>
<dbReference type="GO" id="GO:0016149">
    <property type="term" value="F:translation release factor activity, codon specific"/>
    <property type="evidence" value="ECO:0007669"/>
    <property type="project" value="UniProtKB-UniRule"/>
</dbReference>
<dbReference type="FunFam" id="3.30.160.20:FF:000004">
    <property type="entry name" value="Peptide chain release factor 1"/>
    <property type="match status" value="1"/>
</dbReference>
<dbReference type="FunFam" id="3.30.70.1660:FF:000002">
    <property type="entry name" value="Peptide chain release factor 1"/>
    <property type="match status" value="1"/>
</dbReference>
<dbReference type="FunFam" id="3.30.70.1660:FF:000004">
    <property type="entry name" value="Peptide chain release factor 1"/>
    <property type="match status" value="1"/>
</dbReference>
<dbReference type="Gene3D" id="3.30.160.20">
    <property type="match status" value="1"/>
</dbReference>
<dbReference type="Gene3D" id="3.30.70.1660">
    <property type="match status" value="2"/>
</dbReference>
<dbReference type="Gene3D" id="6.10.140.1950">
    <property type="match status" value="1"/>
</dbReference>
<dbReference type="HAMAP" id="MF_00093">
    <property type="entry name" value="Rel_fac_1"/>
    <property type="match status" value="1"/>
</dbReference>
<dbReference type="InterPro" id="IPR005139">
    <property type="entry name" value="PCRF"/>
</dbReference>
<dbReference type="InterPro" id="IPR000352">
    <property type="entry name" value="Pep_chain_release_fac_I"/>
</dbReference>
<dbReference type="InterPro" id="IPR045853">
    <property type="entry name" value="Pep_chain_release_fac_I_sf"/>
</dbReference>
<dbReference type="InterPro" id="IPR050057">
    <property type="entry name" value="Prokaryotic/Mito_RF"/>
</dbReference>
<dbReference type="InterPro" id="IPR004373">
    <property type="entry name" value="RF-1"/>
</dbReference>
<dbReference type="NCBIfam" id="TIGR00019">
    <property type="entry name" value="prfA"/>
    <property type="match status" value="1"/>
</dbReference>
<dbReference type="NCBIfam" id="NF001859">
    <property type="entry name" value="PRK00591.1"/>
    <property type="match status" value="1"/>
</dbReference>
<dbReference type="PANTHER" id="PTHR43804">
    <property type="entry name" value="LD18447P"/>
    <property type="match status" value="1"/>
</dbReference>
<dbReference type="PANTHER" id="PTHR43804:SF7">
    <property type="entry name" value="LD18447P"/>
    <property type="match status" value="1"/>
</dbReference>
<dbReference type="Pfam" id="PF03462">
    <property type="entry name" value="PCRF"/>
    <property type="match status" value="1"/>
</dbReference>
<dbReference type="Pfam" id="PF00472">
    <property type="entry name" value="RF-1"/>
    <property type="match status" value="1"/>
</dbReference>
<dbReference type="SMART" id="SM00937">
    <property type="entry name" value="PCRF"/>
    <property type="match status" value="1"/>
</dbReference>
<dbReference type="SUPFAM" id="SSF75620">
    <property type="entry name" value="Release factor"/>
    <property type="match status" value="1"/>
</dbReference>
<dbReference type="PROSITE" id="PS00745">
    <property type="entry name" value="RF_PROK_I"/>
    <property type="match status" value="1"/>
</dbReference>
<organism>
    <name type="scientific">Brucella abortus (strain 2308)</name>
    <dbReference type="NCBI Taxonomy" id="359391"/>
    <lineage>
        <taxon>Bacteria</taxon>
        <taxon>Pseudomonadati</taxon>
        <taxon>Pseudomonadota</taxon>
        <taxon>Alphaproteobacteria</taxon>
        <taxon>Hyphomicrobiales</taxon>
        <taxon>Brucellaceae</taxon>
        <taxon>Brucella/Ochrobactrum group</taxon>
        <taxon>Brucella</taxon>
    </lineage>
</organism>
<gene>
    <name evidence="1" type="primary">prfA</name>
    <name type="ordered locus">BAB1_1872</name>
</gene>
<evidence type="ECO:0000255" key="1">
    <source>
        <dbReference type="HAMAP-Rule" id="MF_00093"/>
    </source>
</evidence>
<evidence type="ECO:0000256" key="2">
    <source>
        <dbReference type="SAM" id="MobiDB-lite"/>
    </source>
</evidence>
<proteinExistence type="inferred from homology"/>
<sequence length="359" mass="39925">MIALPQDRMDQLLKRFSMIESQMANNPDSDTYVKLASEYSELQDVVGKIRELSDARMEASDLAAMRDDASTDAEMRALAVEELPEVEKRIAVLEQDVQILLLPKDAADDKNAILEIRAGTGGLEATLFAGDLFRMYERYAAEKGWRVELVSASEGDAGGYKEIIATVSGKGVFSKLKFESGVHRVQRVPETEAGGRIHTSAATVAVLPEAEDIDIEIRNEDIRIDTMRASGAGGQHVNTTDSAVRITHIPTGIMVVQAEKSQHQNRARAMQILRARLYDMERQKAESERSQARRSQVGSGDRSERIRTYNFPQGRVTDHRINLTLYKLDRVMEGDLDELVDALISDHQTALLAELGEQP</sequence>
<accession>Q2YLN8</accession>
<comment type="function">
    <text evidence="1">Peptide chain release factor 1 directs the termination of translation in response to the peptide chain termination codons UAG and UAA.</text>
</comment>
<comment type="subcellular location">
    <subcellularLocation>
        <location evidence="1">Cytoplasm</location>
    </subcellularLocation>
</comment>
<comment type="PTM">
    <text evidence="1">Methylated by PrmC. Methylation increases the termination efficiency of RF1.</text>
</comment>
<comment type="similarity">
    <text evidence="1">Belongs to the prokaryotic/mitochondrial release factor family.</text>
</comment>
<reference key="1">
    <citation type="journal article" date="2005" name="Infect. Immun.">
        <title>Whole-genome analyses of speciation events in pathogenic Brucellae.</title>
        <authorList>
            <person name="Chain P.S."/>
            <person name="Comerci D.J."/>
            <person name="Tolmasky M.E."/>
            <person name="Larimer F.W."/>
            <person name="Malfatti S.A."/>
            <person name="Vergez L.M."/>
            <person name="Aguero F."/>
            <person name="Land M.L."/>
            <person name="Ugalde R.A."/>
            <person name="Garcia E."/>
        </authorList>
    </citation>
    <scope>NUCLEOTIDE SEQUENCE [LARGE SCALE GENOMIC DNA]</scope>
    <source>
        <strain>2308</strain>
    </source>
</reference>
<protein>
    <recommendedName>
        <fullName evidence="1">Peptide chain release factor 1</fullName>
        <shortName evidence="1">RF-1</shortName>
    </recommendedName>
</protein>
<feature type="chain" id="PRO_0000263243" description="Peptide chain release factor 1">
    <location>
        <begin position="1"/>
        <end position="359"/>
    </location>
</feature>
<feature type="region of interest" description="Disordered" evidence="2">
    <location>
        <begin position="283"/>
        <end position="309"/>
    </location>
</feature>
<feature type="modified residue" description="N5-methylglutamine" evidence="1">
    <location>
        <position position="235"/>
    </location>
</feature>
<keyword id="KW-0963">Cytoplasm</keyword>
<keyword id="KW-0488">Methylation</keyword>
<keyword id="KW-0648">Protein biosynthesis</keyword>
<keyword id="KW-1185">Reference proteome</keyword>
<name>RF1_BRUA2</name>